<gene>
    <name evidence="2" type="primary">whiA</name>
    <name type="ordered locus">ML0565</name>
</gene>
<dbReference type="EMBL" id="AL583918">
    <property type="protein sequence ID" value="CAC30073.1"/>
    <property type="status" value="ALT_INIT"/>
    <property type="molecule type" value="Genomic_DNA"/>
</dbReference>
<dbReference type="PIR" id="E86979">
    <property type="entry name" value="E86979"/>
</dbReference>
<dbReference type="RefSeq" id="WP_010907803.1">
    <property type="nucleotide sequence ID" value="NC_002677.1"/>
</dbReference>
<dbReference type="SMR" id="Q9CCN8"/>
<dbReference type="STRING" id="272631.gene:17574386"/>
<dbReference type="KEGG" id="mle:ML0565"/>
<dbReference type="PATRIC" id="fig|272631.5.peg.976"/>
<dbReference type="Leproma" id="ML0565"/>
<dbReference type="eggNOG" id="COG1481">
    <property type="taxonomic scope" value="Bacteria"/>
</dbReference>
<dbReference type="HOGENOM" id="CLU_053282_0_0_11"/>
<dbReference type="Proteomes" id="UP000000806">
    <property type="component" value="Chromosome"/>
</dbReference>
<dbReference type="GO" id="GO:0003677">
    <property type="term" value="F:DNA binding"/>
    <property type="evidence" value="ECO:0007669"/>
    <property type="project" value="UniProtKB-UniRule"/>
</dbReference>
<dbReference type="GO" id="GO:0051301">
    <property type="term" value="P:cell division"/>
    <property type="evidence" value="ECO:0007669"/>
    <property type="project" value="UniProtKB-UniRule"/>
</dbReference>
<dbReference type="GO" id="GO:0043937">
    <property type="term" value="P:regulation of sporulation"/>
    <property type="evidence" value="ECO:0007669"/>
    <property type="project" value="InterPro"/>
</dbReference>
<dbReference type="FunFam" id="3.10.28.10:FF:000001">
    <property type="entry name" value="Probable cell division protein WhiA"/>
    <property type="match status" value="1"/>
</dbReference>
<dbReference type="Gene3D" id="3.10.28.10">
    <property type="entry name" value="Homing endonucleases"/>
    <property type="match status" value="1"/>
</dbReference>
<dbReference type="HAMAP" id="MF_01420">
    <property type="entry name" value="HTH_type_WhiA"/>
    <property type="match status" value="1"/>
</dbReference>
<dbReference type="InterPro" id="IPR027434">
    <property type="entry name" value="Homing_endonucl"/>
</dbReference>
<dbReference type="InterPro" id="IPR018478">
    <property type="entry name" value="Sporu_reg_WhiA_N_dom"/>
</dbReference>
<dbReference type="InterPro" id="IPR003802">
    <property type="entry name" value="Sporulation_regulator_WhiA"/>
</dbReference>
<dbReference type="InterPro" id="IPR023054">
    <property type="entry name" value="Sporulation_regulator_WhiA_C"/>
</dbReference>
<dbReference type="InterPro" id="IPR039518">
    <property type="entry name" value="WhiA_LAGLIDADG_dom"/>
</dbReference>
<dbReference type="NCBIfam" id="TIGR00647">
    <property type="entry name" value="DNA_bind_WhiA"/>
    <property type="match status" value="1"/>
</dbReference>
<dbReference type="PANTHER" id="PTHR37307">
    <property type="entry name" value="CELL DIVISION PROTEIN WHIA-RELATED"/>
    <property type="match status" value="1"/>
</dbReference>
<dbReference type="PANTHER" id="PTHR37307:SF1">
    <property type="entry name" value="CELL DIVISION PROTEIN WHIA-RELATED"/>
    <property type="match status" value="1"/>
</dbReference>
<dbReference type="Pfam" id="PF02650">
    <property type="entry name" value="HTH_WhiA"/>
    <property type="match status" value="1"/>
</dbReference>
<dbReference type="Pfam" id="PF14527">
    <property type="entry name" value="LAGLIDADG_WhiA"/>
    <property type="match status" value="1"/>
</dbReference>
<dbReference type="Pfam" id="PF10298">
    <property type="entry name" value="WhiA_N"/>
    <property type="match status" value="1"/>
</dbReference>
<protein>
    <recommendedName>
        <fullName evidence="2">Probable cell division protein WhiA</fullName>
    </recommendedName>
</protein>
<organism>
    <name type="scientific">Mycobacterium leprae (strain TN)</name>
    <dbReference type="NCBI Taxonomy" id="272631"/>
    <lineage>
        <taxon>Bacteria</taxon>
        <taxon>Bacillati</taxon>
        <taxon>Actinomycetota</taxon>
        <taxon>Actinomycetes</taxon>
        <taxon>Mycobacteriales</taxon>
        <taxon>Mycobacteriaceae</taxon>
        <taxon>Mycobacterium</taxon>
    </lineage>
</organism>
<evidence type="ECO:0000250" key="1">
    <source>
        <dbReference type="UniProtKB" id="P9WF45"/>
    </source>
</evidence>
<evidence type="ECO:0000255" key="2">
    <source>
        <dbReference type="HAMAP-Rule" id="MF_01420"/>
    </source>
</evidence>
<feature type="chain" id="PRO_0000376526" description="Probable cell division protein WhiA">
    <location>
        <begin position="1"/>
        <end position="327"/>
    </location>
</feature>
<feature type="DNA-binding region" description="H-T-H motif" evidence="2">
    <location>
        <begin position="275"/>
        <end position="308"/>
    </location>
</feature>
<keyword id="KW-0131">Cell cycle</keyword>
<keyword id="KW-0132">Cell division</keyword>
<keyword id="KW-0238">DNA-binding</keyword>
<keyword id="KW-1185">Reference proteome</keyword>
<accession>Q9CCN8</accession>
<name>WHIA_MYCLE</name>
<comment type="function">
    <text evidence="2">Involved in cell division and chromosome segregation.</text>
</comment>
<comment type="similarity">
    <text evidence="2">Belongs to the WhiA family.</text>
</comment>
<comment type="sequence caution" evidence="1">
    <conflict type="erroneous initiation">
        <sequence resource="EMBL-CDS" id="CAC30073"/>
    </conflict>
    <text>Truncated N-terminus.</text>
</comment>
<proteinExistence type="inferred from homology"/>
<reference key="1">
    <citation type="journal article" date="2001" name="Nature">
        <title>Massive gene decay in the leprosy bacillus.</title>
        <authorList>
            <person name="Cole S.T."/>
            <person name="Eiglmeier K."/>
            <person name="Parkhill J."/>
            <person name="James K.D."/>
            <person name="Thomson N.R."/>
            <person name="Wheeler P.R."/>
            <person name="Honore N."/>
            <person name="Garnier T."/>
            <person name="Churcher C.M."/>
            <person name="Harris D.E."/>
            <person name="Mungall K.L."/>
            <person name="Basham D."/>
            <person name="Brown D."/>
            <person name="Chillingworth T."/>
            <person name="Connor R."/>
            <person name="Davies R.M."/>
            <person name="Devlin K."/>
            <person name="Duthoy S."/>
            <person name="Feltwell T."/>
            <person name="Fraser A."/>
            <person name="Hamlin N."/>
            <person name="Holroyd S."/>
            <person name="Hornsby T."/>
            <person name="Jagels K."/>
            <person name="Lacroix C."/>
            <person name="Maclean J."/>
            <person name="Moule S."/>
            <person name="Murphy L.D."/>
            <person name="Oliver K."/>
            <person name="Quail M.A."/>
            <person name="Rajandream M.A."/>
            <person name="Rutherford K.M."/>
            <person name="Rutter S."/>
            <person name="Seeger K."/>
            <person name="Simon S."/>
            <person name="Simmonds M."/>
            <person name="Skelton J."/>
            <person name="Squares R."/>
            <person name="Squares S."/>
            <person name="Stevens K."/>
            <person name="Taylor K."/>
            <person name="Whitehead S."/>
            <person name="Woodward J.R."/>
            <person name="Barrell B.G."/>
        </authorList>
    </citation>
    <scope>NUCLEOTIDE SEQUENCE [LARGE SCALE GENOMIC DNA]</scope>
    <source>
        <strain>TN</strain>
    </source>
</reference>
<sequence length="327" mass="35331">MAMTIEVKDELSRLAVKSISARRAEVTSLLRFAGGLHIVGGRVVIEAEVDLENIARRLRKDIFDLYGYNAVVHVLSASGIRKSVRYVLRVANDGEALARQTGLLDMRGRPVRGLPAQVVGGSLIDAEAVWRGAFLAHGSLTEPGRSSALEVSCPGLEAALALVGAARKLGVNAKAREVRGADRVVVRDGEAIGVLLTRMGAQDTRLVWEERRMRREVRATANRLANFDDANLRRSARAAIAAAARAERALEILGDTVPDHLASAGKLRVEYRQASLEELGRLADPPMTKDAVAGRIRRLLSMADRKAKVEGIPDTESAVTPDLLEDA</sequence>